<comment type="function">
    <text evidence="1">An essential GTPase which binds GTP, GDP and possibly (p)ppGpp with moderate affinity, with high nucleotide exchange rates and a fairly low GTP hydrolysis rate. Plays a role in control of the cell cycle, stress response, ribosome biogenesis and in those bacteria that undergo differentiation, in morphogenesis control.</text>
</comment>
<comment type="cofactor">
    <cofactor evidence="1">
        <name>Mg(2+)</name>
        <dbReference type="ChEBI" id="CHEBI:18420"/>
    </cofactor>
</comment>
<comment type="subunit">
    <text evidence="1">Monomer.</text>
</comment>
<comment type="subcellular location">
    <subcellularLocation>
        <location evidence="1">Cytoplasm</location>
    </subcellularLocation>
</comment>
<comment type="similarity">
    <text evidence="1">Belongs to the TRAFAC class OBG-HflX-like GTPase superfamily. OBG GTPase family.</text>
</comment>
<organism>
    <name type="scientific">Salmonella paratyphi A (strain AKU_12601)</name>
    <dbReference type="NCBI Taxonomy" id="554290"/>
    <lineage>
        <taxon>Bacteria</taxon>
        <taxon>Pseudomonadati</taxon>
        <taxon>Pseudomonadota</taxon>
        <taxon>Gammaproteobacteria</taxon>
        <taxon>Enterobacterales</taxon>
        <taxon>Enterobacteriaceae</taxon>
        <taxon>Salmonella</taxon>
    </lineage>
</organism>
<keyword id="KW-0963">Cytoplasm</keyword>
<keyword id="KW-0342">GTP-binding</keyword>
<keyword id="KW-0378">Hydrolase</keyword>
<keyword id="KW-0460">Magnesium</keyword>
<keyword id="KW-0479">Metal-binding</keyword>
<keyword id="KW-0547">Nucleotide-binding</keyword>
<protein>
    <recommendedName>
        <fullName evidence="1">GTPase Obg</fullName>
        <ecNumber evidence="1">3.6.5.-</ecNumber>
    </recommendedName>
    <alternativeName>
        <fullName evidence="1">GTP-binding protein Obg</fullName>
    </alternativeName>
</protein>
<feature type="chain" id="PRO_0000386228" description="GTPase Obg">
    <location>
        <begin position="1"/>
        <end position="390"/>
    </location>
</feature>
<feature type="domain" description="Obg" evidence="2">
    <location>
        <begin position="1"/>
        <end position="159"/>
    </location>
</feature>
<feature type="domain" description="OBG-type G" evidence="1">
    <location>
        <begin position="160"/>
        <end position="333"/>
    </location>
</feature>
<feature type="region of interest" description="Disordered" evidence="3">
    <location>
        <begin position="127"/>
        <end position="147"/>
    </location>
</feature>
<feature type="compositionally biased region" description="Polar residues" evidence="3">
    <location>
        <begin position="129"/>
        <end position="145"/>
    </location>
</feature>
<feature type="binding site" evidence="1">
    <location>
        <begin position="166"/>
        <end position="173"/>
    </location>
    <ligand>
        <name>GTP</name>
        <dbReference type="ChEBI" id="CHEBI:37565"/>
    </ligand>
</feature>
<feature type="binding site" evidence="1">
    <location>
        <position position="173"/>
    </location>
    <ligand>
        <name>Mg(2+)</name>
        <dbReference type="ChEBI" id="CHEBI:18420"/>
    </ligand>
</feature>
<feature type="binding site" evidence="1">
    <location>
        <begin position="191"/>
        <end position="195"/>
    </location>
    <ligand>
        <name>GTP</name>
        <dbReference type="ChEBI" id="CHEBI:37565"/>
    </ligand>
</feature>
<feature type="binding site" evidence="1">
    <location>
        <position position="193"/>
    </location>
    <ligand>
        <name>Mg(2+)</name>
        <dbReference type="ChEBI" id="CHEBI:18420"/>
    </ligand>
</feature>
<feature type="binding site" evidence="1">
    <location>
        <begin position="213"/>
        <end position="216"/>
    </location>
    <ligand>
        <name>GTP</name>
        <dbReference type="ChEBI" id="CHEBI:37565"/>
    </ligand>
</feature>
<feature type="binding site" evidence="1">
    <location>
        <begin position="283"/>
        <end position="286"/>
    </location>
    <ligand>
        <name>GTP</name>
        <dbReference type="ChEBI" id="CHEBI:37565"/>
    </ligand>
</feature>
<feature type="binding site" evidence="1">
    <location>
        <begin position="314"/>
        <end position="316"/>
    </location>
    <ligand>
        <name>GTP</name>
        <dbReference type="ChEBI" id="CHEBI:37565"/>
    </ligand>
</feature>
<dbReference type="EC" id="3.6.5.-" evidence="1"/>
<dbReference type="EMBL" id="FM200053">
    <property type="protein sequence ID" value="CAR61205.1"/>
    <property type="molecule type" value="Genomic_DNA"/>
</dbReference>
<dbReference type="SMR" id="B5BGK7"/>
<dbReference type="KEGG" id="sek:SSPA2956"/>
<dbReference type="HOGENOM" id="CLU_011747_2_0_6"/>
<dbReference type="Proteomes" id="UP000001869">
    <property type="component" value="Chromosome"/>
</dbReference>
<dbReference type="GO" id="GO:0005737">
    <property type="term" value="C:cytoplasm"/>
    <property type="evidence" value="ECO:0007669"/>
    <property type="project" value="UniProtKB-SubCell"/>
</dbReference>
<dbReference type="GO" id="GO:0005525">
    <property type="term" value="F:GTP binding"/>
    <property type="evidence" value="ECO:0007669"/>
    <property type="project" value="UniProtKB-UniRule"/>
</dbReference>
<dbReference type="GO" id="GO:0003924">
    <property type="term" value="F:GTPase activity"/>
    <property type="evidence" value="ECO:0007669"/>
    <property type="project" value="UniProtKB-UniRule"/>
</dbReference>
<dbReference type="GO" id="GO:0000287">
    <property type="term" value="F:magnesium ion binding"/>
    <property type="evidence" value="ECO:0007669"/>
    <property type="project" value="InterPro"/>
</dbReference>
<dbReference type="GO" id="GO:0042254">
    <property type="term" value="P:ribosome biogenesis"/>
    <property type="evidence" value="ECO:0007669"/>
    <property type="project" value="UniProtKB-UniRule"/>
</dbReference>
<dbReference type="CDD" id="cd01898">
    <property type="entry name" value="Obg"/>
    <property type="match status" value="1"/>
</dbReference>
<dbReference type="FunFam" id="2.70.210.12:FF:000001">
    <property type="entry name" value="GTPase Obg"/>
    <property type="match status" value="1"/>
</dbReference>
<dbReference type="FunFam" id="3.40.50.300:FF:000185">
    <property type="entry name" value="GTPase Obg"/>
    <property type="match status" value="1"/>
</dbReference>
<dbReference type="Gene3D" id="2.70.210.12">
    <property type="entry name" value="GTP1/OBG domain"/>
    <property type="match status" value="1"/>
</dbReference>
<dbReference type="Gene3D" id="3.40.50.300">
    <property type="entry name" value="P-loop containing nucleotide triphosphate hydrolases"/>
    <property type="match status" value="1"/>
</dbReference>
<dbReference type="HAMAP" id="MF_01454">
    <property type="entry name" value="GTPase_Obg"/>
    <property type="match status" value="1"/>
</dbReference>
<dbReference type="InterPro" id="IPR031167">
    <property type="entry name" value="G_OBG"/>
</dbReference>
<dbReference type="InterPro" id="IPR006073">
    <property type="entry name" value="GTP-bd"/>
</dbReference>
<dbReference type="InterPro" id="IPR014100">
    <property type="entry name" value="GTP-bd_Obg/CgtA"/>
</dbReference>
<dbReference type="InterPro" id="IPR006074">
    <property type="entry name" value="GTP1-OBG_CS"/>
</dbReference>
<dbReference type="InterPro" id="IPR006169">
    <property type="entry name" value="GTP1_OBG_dom"/>
</dbReference>
<dbReference type="InterPro" id="IPR036726">
    <property type="entry name" value="GTP1_OBG_dom_sf"/>
</dbReference>
<dbReference type="InterPro" id="IPR045086">
    <property type="entry name" value="OBG_GTPase"/>
</dbReference>
<dbReference type="InterPro" id="IPR027417">
    <property type="entry name" value="P-loop_NTPase"/>
</dbReference>
<dbReference type="NCBIfam" id="TIGR02729">
    <property type="entry name" value="Obg_CgtA"/>
    <property type="match status" value="1"/>
</dbReference>
<dbReference type="NCBIfam" id="NF008955">
    <property type="entry name" value="PRK12297.1"/>
    <property type="match status" value="1"/>
</dbReference>
<dbReference type="NCBIfam" id="NF008956">
    <property type="entry name" value="PRK12299.1"/>
    <property type="match status" value="1"/>
</dbReference>
<dbReference type="PANTHER" id="PTHR11702">
    <property type="entry name" value="DEVELOPMENTALLY REGULATED GTP-BINDING PROTEIN-RELATED"/>
    <property type="match status" value="1"/>
</dbReference>
<dbReference type="PANTHER" id="PTHR11702:SF31">
    <property type="entry name" value="MITOCHONDRIAL RIBOSOME-ASSOCIATED GTPASE 2"/>
    <property type="match status" value="1"/>
</dbReference>
<dbReference type="Pfam" id="PF01018">
    <property type="entry name" value="GTP1_OBG"/>
    <property type="match status" value="1"/>
</dbReference>
<dbReference type="Pfam" id="PF01926">
    <property type="entry name" value="MMR_HSR1"/>
    <property type="match status" value="1"/>
</dbReference>
<dbReference type="PIRSF" id="PIRSF002401">
    <property type="entry name" value="GTP_bd_Obg/CgtA"/>
    <property type="match status" value="1"/>
</dbReference>
<dbReference type="PRINTS" id="PR00326">
    <property type="entry name" value="GTP1OBG"/>
</dbReference>
<dbReference type="SUPFAM" id="SSF82051">
    <property type="entry name" value="Obg GTP-binding protein N-terminal domain"/>
    <property type="match status" value="1"/>
</dbReference>
<dbReference type="SUPFAM" id="SSF52540">
    <property type="entry name" value="P-loop containing nucleoside triphosphate hydrolases"/>
    <property type="match status" value="1"/>
</dbReference>
<dbReference type="PROSITE" id="PS51710">
    <property type="entry name" value="G_OBG"/>
    <property type="match status" value="1"/>
</dbReference>
<dbReference type="PROSITE" id="PS00905">
    <property type="entry name" value="GTP1_OBG"/>
    <property type="match status" value="1"/>
</dbReference>
<dbReference type="PROSITE" id="PS51883">
    <property type="entry name" value="OBG"/>
    <property type="match status" value="1"/>
</dbReference>
<name>OBG_SALPK</name>
<gene>
    <name evidence="1" type="primary">obg</name>
    <name type="ordered locus">SSPA2956</name>
</gene>
<sequence>MKFVDEASILVVAGDGGNGCVSFRREKYIPKGGPDGGDGGDGGDVWMEADENLNTLIDYRFEKSFRAERGQNGASRDCTGKRGKDVTIKVPVGTRVIDQGTGETMGDMTKHGQRLLVAKGGWHGLGNTRFKSSVNRTPRQKTNGTPGDKRDLLLELMLLADVGMLGMPNAGKSTFIRAVSAAKPKVADYPFTTLVPSLGVVRMDSEKSFVVADIPGLIEGAAEGAGLGIRFLKHLERCRVLLHLIDIDPIDGSDPVENARIIIGELEKYSQDLAAKPRWLVFNKIDLMDKTEAEEKAKAIAEALGWEGKYYLISAASQLGVKDLCWDVMTFIIENPIAQAEEAKQPEKVEFMWDDYHRQQLAEVEEDADDDWDDDWDEDDEEGVEFIYKR</sequence>
<accession>B5BGK7</accession>
<evidence type="ECO:0000255" key="1">
    <source>
        <dbReference type="HAMAP-Rule" id="MF_01454"/>
    </source>
</evidence>
<evidence type="ECO:0000255" key="2">
    <source>
        <dbReference type="PROSITE-ProRule" id="PRU01231"/>
    </source>
</evidence>
<evidence type="ECO:0000256" key="3">
    <source>
        <dbReference type="SAM" id="MobiDB-lite"/>
    </source>
</evidence>
<proteinExistence type="inferred from homology"/>
<reference key="1">
    <citation type="journal article" date="2009" name="BMC Genomics">
        <title>Pseudogene accumulation in the evolutionary histories of Salmonella enterica serovars Paratyphi A and Typhi.</title>
        <authorList>
            <person name="Holt K.E."/>
            <person name="Thomson N.R."/>
            <person name="Wain J."/>
            <person name="Langridge G.C."/>
            <person name="Hasan R."/>
            <person name="Bhutta Z.A."/>
            <person name="Quail M.A."/>
            <person name="Norbertczak H."/>
            <person name="Walker D."/>
            <person name="Simmonds M."/>
            <person name="White B."/>
            <person name="Bason N."/>
            <person name="Mungall K."/>
            <person name="Dougan G."/>
            <person name="Parkhill J."/>
        </authorList>
    </citation>
    <scope>NUCLEOTIDE SEQUENCE [LARGE SCALE GENOMIC DNA]</scope>
    <source>
        <strain>AKU_12601</strain>
    </source>
</reference>